<sequence>MKYTLIAAIVVLALAQGTLAVEQSPELEKMAQFFEGMKTELMATVQKVSESLQSQTIIEDGRTQLEPIMTQIQEHLAPLATSVQEKVTPLAEDMQQKLKPYVDEFQSELESVLRKLLDQAKAITQ</sequence>
<accession>Q56TU0</accession>
<organism>
    <name type="scientific">Gadus morhua</name>
    <name type="common">Atlantic cod</name>
    <dbReference type="NCBI Taxonomy" id="8049"/>
    <lineage>
        <taxon>Eukaryota</taxon>
        <taxon>Metazoa</taxon>
        <taxon>Chordata</taxon>
        <taxon>Craniata</taxon>
        <taxon>Vertebrata</taxon>
        <taxon>Euteleostomi</taxon>
        <taxon>Actinopterygii</taxon>
        <taxon>Neopterygii</taxon>
        <taxon>Teleostei</taxon>
        <taxon>Neoteleostei</taxon>
        <taxon>Acanthomorphata</taxon>
        <taxon>Zeiogadaria</taxon>
        <taxon>Gadariae</taxon>
        <taxon>Gadiformes</taxon>
        <taxon>Gadoidei</taxon>
        <taxon>Gadidae</taxon>
        <taxon>Gadus</taxon>
    </lineage>
</organism>
<protein>
    <recommendedName>
        <fullName>Type-4 ice-structuring protein</fullName>
    </recommendedName>
    <alternativeName>
        <fullName>Antifreeze protein type IV</fullName>
    </alternativeName>
</protein>
<proteinExistence type="evidence at transcript level"/>
<evidence type="ECO:0000250" key="1"/>
<evidence type="ECO:0000255" key="2"/>
<evidence type="ECO:0000305" key="3"/>
<dbReference type="EMBL" id="AY584595">
    <property type="protein sequence ID" value="AAT95404.1"/>
    <property type="molecule type" value="mRNA"/>
</dbReference>
<dbReference type="RefSeq" id="XP_030203814.1">
    <property type="nucleotide sequence ID" value="XM_030347954.1"/>
</dbReference>
<dbReference type="SMR" id="Q56TU0"/>
<dbReference type="Ensembl" id="ENSGMOT00000035463.1">
    <property type="protein sequence ID" value="ENSGMOP00000040258.1"/>
    <property type="gene ID" value="ENSGMOG00000031648.1"/>
</dbReference>
<dbReference type="GeneID" id="115536206"/>
<dbReference type="GeneTree" id="ENSGT00760000119766"/>
<dbReference type="OMA" id="QSAVMKF"/>
<dbReference type="OrthoDB" id="8446556at2759"/>
<dbReference type="Proteomes" id="UP000694546">
    <property type="component" value="Chromosome 22"/>
</dbReference>
<dbReference type="GO" id="GO:0005576">
    <property type="term" value="C:extracellular region"/>
    <property type="evidence" value="ECO:0007669"/>
    <property type="project" value="UniProtKB-SubCell"/>
</dbReference>
<dbReference type="Gene3D" id="1.20.120.20">
    <property type="entry name" value="Apolipoprotein"/>
    <property type="match status" value="1"/>
</dbReference>
<dbReference type="SUPFAM" id="SSF58113">
    <property type="entry name" value="Apolipoprotein A-I"/>
    <property type="match status" value="1"/>
</dbReference>
<name>AFP4_GADMO</name>
<comment type="function">
    <text evidence="1">Antifreeze proteins lower the blood freezing point.</text>
</comment>
<comment type="subcellular location">
    <subcellularLocation>
        <location evidence="1">Secreted</location>
    </subcellularLocation>
</comment>
<comment type="similarity">
    <text evidence="3">Belongs to the apolipoprotein A1/A4/E family.</text>
</comment>
<reference key="1">
    <citation type="submission" date="2004-03" db="EMBL/GenBank/DDBJ databases">
        <title>A cod antifreeze protein.</title>
        <authorList>
            <person name="Goetz F.W."/>
            <person name="Norberg B."/>
            <person name="Duman J."/>
        </authorList>
    </citation>
    <scope>NUCLEOTIDE SEQUENCE [MRNA]</scope>
    <source>
        <tissue>Ovary</tissue>
    </source>
</reference>
<feature type="signal peptide" evidence="2">
    <location>
        <begin position="1"/>
        <end position="20"/>
    </location>
</feature>
<feature type="chain" id="PRO_0000042948" description="Type-4 ice-structuring protein">
    <location>
        <begin position="21"/>
        <end position="125"/>
    </location>
</feature>
<keyword id="KW-0047">Antifreeze protein</keyword>
<keyword id="KW-1185">Reference proteome</keyword>
<keyword id="KW-0964">Secreted</keyword>
<keyword id="KW-0732">Signal</keyword>